<keyword id="KW-0687">Ribonucleoprotein</keyword>
<keyword id="KW-0689">Ribosomal protein</keyword>
<keyword id="KW-0694">RNA-binding</keyword>
<keyword id="KW-0699">rRNA-binding</keyword>
<name>RL18_ECO5E</name>
<reference key="1">
    <citation type="journal article" date="2011" name="Proc. Natl. Acad. Sci. U.S.A.">
        <title>Genomic anatomy of Escherichia coli O157:H7 outbreaks.</title>
        <authorList>
            <person name="Eppinger M."/>
            <person name="Mammel M.K."/>
            <person name="Leclerc J.E."/>
            <person name="Ravel J."/>
            <person name="Cebula T.A."/>
        </authorList>
    </citation>
    <scope>NUCLEOTIDE SEQUENCE [LARGE SCALE GENOMIC DNA]</scope>
    <source>
        <strain>EC4115 / EHEC</strain>
    </source>
</reference>
<feature type="chain" id="PRO_1000142657" description="Large ribosomal subunit protein uL18">
    <location>
        <begin position="1"/>
        <end position="117"/>
    </location>
</feature>
<proteinExistence type="inferred from homology"/>
<gene>
    <name evidence="1" type="primary">rplR</name>
    <name type="ordered locus">ECH74115_4627</name>
</gene>
<accession>B5YTM5</accession>
<evidence type="ECO:0000255" key="1">
    <source>
        <dbReference type="HAMAP-Rule" id="MF_01337"/>
    </source>
</evidence>
<evidence type="ECO:0000305" key="2"/>
<dbReference type="EMBL" id="CP001164">
    <property type="protein sequence ID" value="ACI36761.1"/>
    <property type="molecule type" value="Genomic_DNA"/>
</dbReference>
<dbReference type="RefSeq" id="WP_000358960.1">
    <property type="nucleotide sequence ID" value="NC_011353.1"/>
</dbReference>
<dbReference type="SMR" id="B5YTM5"/>
<dbReference type="GeneID" id="98390426"/>
<dbReference type="KEGG" id="ecf:ECH74115_4627"/>
<dbReference type="HOGENOM" id="CLU_098841_0_1_6"/>
<dbReference type="GO" id="GO:0022625">
    <property type="term" value="C:cytosolic large ribosomal subunit"/>
    <property type="evidence" value="ECO:0007669"/>
    <property type="project" value="TreeGrafter"/>
</dbReference>
<dbReference type="GO" id="GO:0008097">
    <property type="term" value="F:5S rRNA binding"/>
    <property type="evidence" value="ECO:0007669"/>
    <property type="project" value="TreeGrafter"/>
</dbReference>
<dbReference type="GO" id="GO:0003735">
    <property type="term" value="F:structural constituent of ribosome"/>
    <property type="evidence" value="ECO:0007669"/>
    <property type="project" value="InterPro"/>
</dbReference>
<dbReference type="GO" id="GO:0006412">
    <property type="term" value="P:translation"/>
    <property type="evidence" value="ECO:0007669"/>
    <property type="project" value="UniProtKB-UniRule"/>
</dbReference>
<dbReference type="CDD" id="cd00432">
    <property type="entry name" value="Ribosomal_L18_L5e"/>
    <property type="match status" value="1"/>
</dbReference>
<dbReference type="FunFam" id="3.30.420.100:FF:000001">
    <property type="entry name" value="50S ribosomal protein L18"/>
    <property type="match status" value="1"/>
</dbReference>
<dbReference type="Gene3D" id="3.30.420.100">
    <property type="match status" value="1"/>
</dbReference>
<dbReference type="HAMAP" id="MF_01337_B">
    <property type="entry name" value="Ribosomal_uL18_B"/>
    <property type="match status" value="1"/>
</dbReference>
<dbReference type="InterPro" id="IPR004389">
    <property type="entry name" value="Ribosomal_uL18_bac-type"/>
</dbReference>
<dbReference type="InterPro" id="IPR005484">
    <property type="entry name" value="Ribosomal_uL18_bac/euk"/>
</dbReference>
<dbReference type="NCBIfam" id="TIGR00060">
    <property type="entry name" value="L18_bact"/>
    <property type="match status" value="1"/>
</dbReference>
<dbReference type="PANTHER" id="PTHR12899">
    <property type="entry name" value="39S RIBOSOMAL PROTEIN L18, MITOCHONDRIAL"/>
    <property type="match status" value="1"/>
</dbReference>
<dbReference type="PANTHER" id="PTHR12899:SF3">
    <property type="entry name" value="LARGE RIBOSOMAL SUBUNIT PROTEIN UL18M"/>
    <property type="match status" value="1"/>
</dbReference>
<dbReference type="Pfam" id="PF00861">
    <property type="entry name" value="Ribosomal_L18p"/>
    <property type="match status" value="1"/>
</dbReference>
<dbReference type="SUPFAM" id="SSF53137">
    <property type="entry name" value="Translational machinery components"/>
    <property type="match status" value="1"/>
</dbReference>
<protein>
    <recommendedName>
        <fullName evidence="1">Large ribosomal subunit protein uL18</fullName>
    </recommendedName>
    <alternativeName>
        <fullName evidence="2">50S ribosomal protein L18</fullName>
    </alternativeName>
</protein>
<organism>
    <name type="scientific">Escherichia coli O157:H7 (strain EC4115 / EHEC)</name>
    <dbReference type="NCBI Taxonomy" id="444450"/>
    <lineage>
        <taxon>Bacteria</taxon>
        <taxon>Pseudomonadati</taxon>
        <taxon>Pseudomonadota</taxon>
        <taxon>Gammaproteobacteria</taxon>
        <taxon>Enterobacterales</taxon>
        <taxon>Enterobacteriaceae</taxon>
        <taxon>Escherichia</taxon>
    </lineage>
</organism>
<sequence>MDKKSARIRRATRARRKLQELGATRLVVHRTPRHIYAQVIAPNGSEVLVAASTVEKAIAEQLKYTGNKDAAAAVGKAVAERALEKGIKDVSFDRSGFQYHGRVQALADAAREAGLQF</sequence>
<comment type="function">
    <text evidence="1">This is one of the proteins that bind and probably mediate the attachment of the 5S RNA into the large ribosomal subunit, where it forms part of the central protuberance.</text>
</comment>
<comment type="subunit">
    <text evidence="1">Part of the 50S ribosomal subunit; part of the 5S rRNA/L5/L18/L25 subcomplex. Contacts the 5S and 23S rRNAs.</text>
</comment>
<comment type="similarity">
    <text evidence="1">Belongs to the universal ribosomal protein uL18 family.</text>
</comment>